<organism>
    <name type="scientific">Symbiobacterium thermophilum (strain DSM 24528 / JCM 14929 / IAM 14863 / T)</name>
    <dbReference type="NCBI Taxonomy" id="292459"/>
    <lineage>
        <taxon>Bacteria</taxon>
        <taxon>Bacillati</taxon>
        <taxon>Bacillota</taxon>
        <taxon>Clostridia</taxon>
        <taxon>Eubacteriales</taxon>
        <taxon>Symbiobacteriaceae</taxon>
        <taxon>Symbiobacterium</taxon>
    </lineage>
</organism>
<comment type="similarity">
    <text evidence="1">Belongs to the UPF0297 family.</text>
</comment>
<feature type="chain" id="PRO_0000216999" description="UPF0297 protein STH1998">
    <location>
        <begin position="1"/>
        <end position="86"/>
    </location>
</feature>
<sequence length="86" mass="9984">MPGTSDKTVYWRNKPEDRNPGEVLQKVYAALKEKGYSPIDQIVGYLLSGDPTYITSHMGARNLIRRIERDELLEELVRSYLEKLEE</sequence>
<evidence type="ECO:0000255" key="1">
    <source>
        <dbReference type="HAMAP-Rule" id="MF_01507"/>
    </source>
</evidence>
<reference key="1">
    <citation type="journal article" date="2004" name="Nucleic Acids Res.">
        <title>Genome sequence of Symbiobacterium thermophilum, an uncultivable bacterium that depends on microbial commensalism.</title>
        <authorList>
            <person name="Ueda K."/>
            <person name="Yamashita A."/>
            <person name="Ishikawa J."/>
            <person name="Shimada M."/>
            <person name="Watsuji T."/>
            <person name="Morimura K."/>
            <person name="Ikeda H."/>
            <person name="Hattori M."/>
            <person name="Beppu T."/>
        </authorList>
    </citation>
    <scope>NUCLEOTIDE SEQUENCE [LARGE SCALE GENOMIC DNA]</scope>
    <source>
        <strain>DSM 24528 / JCM 14929 / IAM 14863 / T</strain>
    </source>
</reference>
<name>Y1998_SYMTH</name>
<gene>
    <name type="ordered locus">STH1998</name>
</gene>
<keyword id="KW-1185">Reference proteome</keyword>
<dbReference type="EMBL" id="AP006840">
    <property type="protein sequence ID" value="BAD40983.1"/>
    <property type="molecule type" value="Genomic_DNA"/>
</dbReference>
<dbReference type="RefSeq" id="WP_011196125.1">
    <property type="nucleotide sequence ID" value="NC_006177.1"/>
</dbReference>
<dbReference type="SMR" id="Q67MW0"/>
<dbReference type="STRING" id="292459.STH1998"/>
<dbReference type="KEGG" id="sth:STH1998"/>
<dbReference type="eggNOG" id="COG4472">
    <property type="taxonomic scope" value="Bacteria"/>
</dbReference>
<dbReference type="HOGENOM" id="CLU_162466_0_0_9"/>
<dbReference type="OrthoDB" id="9796303at2"/>
<dbReference type="Proteomes" id="UP000000417">
    <property type="component" value="Chromosome"/>
</dbReference>
<dbReference type="HAMAP" id="MF_01507">
    <property type="entry name" value="UPF0297"/>
    <property type="match status" value="1"/>
</dbReference>
<dbReference type="InterPro" id="IPR009309">
    <property type="entry name" value="IreB"/>
</dbReference>
<dbReference type="NCBIfam" id="NF003997">
    <property type="entry name" value="PRK05473.1"/>
    <property type="match status" value="1"/>
</dbReference>
<dbReference type="PANTHER" id="PTHR40067">
    <property type="entry name" value="UPF0297 PROTEIN YRZL"/>
    <property type="match status" value="1"/>
</dbReference>
<dbReference type="PANTHER" id="PTHR40067:SF1">
    <property type="entry name" value="UPF0297 PROTEIN YRZL"/>
    <property type="match status" value="1"/>
</dbReference>
<dbReference type="Pfam" id="PF06135">
    <property type="entry name" value="IreB"/>
    <property type="match status" value="1"/>
</dbReference>
<dbReference type="PIRSF" id="PIRSF037258">
    <property type="entry name" value="DUF965_bac"/>
    <property type="match status" value="1"/>
</dbReference>
<protein>
    <recommendedName>
        <fullName evidence="1">UPF0297 protein STH1998</fullName>
    </recommendedName>
</protein>
<proteinExistence type="inferred from homology"/>
<accession>Q67MW0</accession>